<proteinExistence type="inferred from homology"/>
<sequence>MIQSQINRNIRLDLADAILLSKAKKDLSFAEIADGTGLAEAFVTAALLGQQALPADAARLVGAKLDLDEDAILLLQMIPLRGCIDDRIPTDPTMYRFYEMLQVYGTTLKALVHEKFGDGIISAINFKLDVKKVADPEGGERAVITLDGKYLPTKPF</sequence>
<name>CYNS_ECOSE</name>
<evidence type="ECO:0000255" key="1">
    <source>
        <dbReference type="HAMAP-Rule" id="MF_00535"/>
    </source>
</evidence>
<dbReference type="EC" id="4.2.1.104" evidence="1"/>
<dbReference type="EMBL" id="AP009240">
    <property type="protein sequence ID" value="BAG75889.1"/>
    <property type="molecule type" value="Genomic_DNA"/>
</dbReference>
<dbReference type="RefSeq" id="WP_000616241.1">
    <property type="nucleotide sequence ID" value="NC_011415.1"/>
</dbReference>
<dbReference type="SMR" id="B6HZW6"/>
<dbReference type="GeneID" id="75202503"/>
<dbReference type="KEGG" id="ecy:ECSE_0365"/>
<dbReference type="HOGENOM" id="CLU_103452_1_1_6"/>
<dbReference type="Proteomes" id="UP000008199">
    <property type="component" value="Chromosome"/>
</dbReference>
<dbReference type="GO" id="GO:0008824">
    <property type="term" value="F:cyanate hydratase activity"/>
    <property type="evidence" value="ECO:0007669"/>
    <property type="project" value="UniProtKB-UniRule"/>
</dbReference>
<dbReference type="GO" id="GO:0003677">
    <property type="term" value="F:DNA binding"/>
    <property type="evidence" value="ECO:0007669"/>
    <property type="project" value="InterPro"/>
</dbReference>
<dbReference type="GO" id="GO:0009439">
    <property type="term" value="P:cyanate metabolic process"/>
    <property type="evidence" value="ECO:0007669"/>
    <property type="project" value="UniProtKB-UniRule"/>
</dbReference>
<dbReference type="CDD" id="cd00559">
    <property type="entry name" value="Cyanase_C"/>
    <property type="match status" value="1"/>
</dbReference>
<dbReference type="FunFam" id="3.30.1160.10:FF:000001">
    <property type="entry name" value="Cyanate hydratase"/>
    <property type="match status" value="1"/>
</dbReference>
<dbReference type="Gene3D" id="3.30.1160.10">
    <property type="entry name" value="Cyanate lyase, C-terminal domain"/>
    <property type="match status" value="1"/>
</dbReference>
<dbReference type="Gene3D" id="1.10.260.40">
    <property type="entry name" value="lambda repressor-like DNA-binding domains"/>
    <property type="match status" value="1"/>
</dbReference>
<dbReference type="HAMAP" id="MF_00535">
    <property type="entry name" value="Cyanate_hydrat"/>
    <property type="match status" value="1"/>
</dbReference>
<dbReference type="InterPro" id="IPR008076">
    <property type="entry name" value="Cyanase"/>
</dbReference>
<dbReference type="InterPro" id="IPR003712">
    <property type="entry name" value="Cyanate_lyase_C"/>
</dbReference>
<dbReference type="InterPro" id="IPR036581">
    <property type="entry name" value="Cyanate_lyase_C_sf"/>
</dbReference>
<dbReference type="InterPro" id="IPR048564">
    <property type="entry name" value="CYNS_N"/>
</dbReference>
<dbReference type="InterPro" id="IPR010982">
    <property type="entry name" value="Lambda_DNA-bd_dom_sf"/>
</dbReference>
<dbReference type="NCBIfam" id="TIGR00673">
    <property type="entry name" value="cynS"/>
    <property type="match status" value="1"/>
</dbReference>
<dbReference type="NCBIfam" id="NF002773">
    <property type="entry name" value="PRK02866.1"/>
    <property type="match status" value="1"/>
</dbReference>
<dbReference type="PANTHER" id="PTHR34186">
    <property type="entry name" value="CYANATE HYDRATASE"/>
    <property type="match status" value="1"/>
</dbReference>
<dbReference type="PANTHER" id="PTHR34186:SF2">
    <property type="entry name" value="CYANATE HYDRATASE"/>
    <property type="match status" value="1"/>
</dbReference>
<dbReference type="Pfam" id="PF02560">
    <property type="entry name" value="Cyanate_lyase"/>
    <property type="match status" value="1"/>
</dbReference>
<dbReference type="Pfam" id="PF21291">
    <property type="entry name" value="CYNS_N"/>
    <property type="match status" value="1"/>
</dbReference>
<dbReference type="PIRSF" id="PIRSF001263">
    <property type="entry name" value="Cyanate_hydratas"/>
    <property type="match status" value="1"/>
</dbReference>
<dbReference type="PRINTS" id="PR01693">
    <property type="entry name" value="CYANASE"/>
</dbReference>
<dbReference type="SMART" id="SM01116">
    <property type="entry name" value="Cyanate_lyase"/>
    <property type="match status" value="1"/>
</dbReference>
<dbReference type="SUPFAM" id="SSF55234">
    <property type="entry name" value="Cyanase C-terminal domain"/>
    <property type="match status" value="1"/>
</dbReference>
<dbReference type="SUPFAM" id="SSF47413">
    <property type="entry name" value="lambda repressor-like DNA-binding domains"/>
    <property type="match status" value="1"/>
</dbReference>
<protein>
    <recommendedName>
        <fullName evidence="1">Cyanate hydratase</fullName>
        <shortName evidence="1">Cyanase</shortName>
        <ecNumber evidence="1">4.2.1.104</ecNumber>
    </recommendedName>
    <alternativeName>
        <fullName evidence="1">Cyanate hydrolase</fullName>
    </alternativeName>
    <alternativeName>
        <fullName evidence="1">Cyanate lyase</fullName>
    </alternativeName>
</protein>
<reference key="1">
    <citation type="journal article" date="2008" name="DNA Res.">
        <title>Complete genome sequence and comparative analysis of the wild-type commensal Escherichia coli strain SE11 isolated from a healthy adult.</title>
        <authorList>
            <person name="Oshima K."/>
            <person name="Toh H."/>
            <person name="Ogura Y."/>
            <person name="Sasamoto H."/>
            <person name="Morita H."/>
            <person name="Park S.-H."/>
            <person name="Ooka T."/>
            <person name="Iyoda S."/>
            <person name="Taylor T.D."/>
            <person name="Hayashi T."/>
            <person name="Itoh K."/>
            <person name="Hattori M."/>
        </authorList>
    </citation>
    <scope>NUCLEOTIDE SEQUENCE [LARGE SCALE GENOMIC DNA]</scope>
    <source>
        <strain>SE11</strain>
    </source>
</reference>
<feature type="chain" id="PRO_1000128228" description="Cyanate hydratase">
    <location>
        <begin position="1"/>
        <end position="156"/>
    </location>
</feature>
<feature type="active site" evidence="1">
    <location>
        <position position="96"/>
    </location>
</feature>
<feature type="active site" evidence="1">
    <location>
        <position position="99"/>
    </location>
</feature>
<feature type="active site" evidence="1">
    <location>
        <position position="122"/>
    </location>
</feature>
<organism>
    <name type="scientific">Escherichia coli (strain SE11)</name>
    <dbReference type="NCBI Taxonomy" id="409438"/>
    <lineage>
        <taxon>Bacteria</taxon>
        <taxon>Pseudomonadati</taxon>
        <taxon>Pseudomonadota</taxon>
        <taxon>Gammaproteobacteria</taxon>
        <taxon>Enterobacterales</taxon>
        <taxon>Enterobacteriaceae</taxon>
        <taxon>Escherichia</taxon>
    </lineage>
</organism>
<keyword id="KW-0456">Lyase</keyword>
<accession>B6HZW6</accession>
<comment type="function">
    <text evidence="1">Catalyzes the reaction of cyanate with bicarbonate to produce ammonia and carbon dioxide.</text>
</comment>
<comment type="catalytic activity">
    <reaction evidence="1">
        <text>cyanate + hydrogencarbonate + 3 H(+) = NH4(+) + 2 CO2</text>
        <dbReference type="Rhea" id="RHEA:11120"/>
        <dbReference type="ChEBI" id="CHEBI:15378"/>
        <dbReference type="ChEBI" id="CHEBI:16526"/>
        <dbReference type="ChEBI" id="CHEBI:17544"/>
        <dbReference type="ChEBI" id="CHEBI:28938"/>
        <dbReference type="ChEBI" id="CHEBI:29195"/>
        <dbReference type="EC" id="4.2.1.104"/>
    </reaction>
</comment>
<comment type="similarity">
    <text evidence="1">Belongs to the cyanase family.</text>
</comment>
<gene>
    <name evidence="1" type="primary">cynS</name>
    <name type="ordered locus">ECSE_0365</name>
</gene>